<evidence type="ECO:0000255" key="1">
    <source>
        <dbReference type="HAMAP-Rule" id="MF_00172"/>
    </source>
</evidence>
<name>METE_BURL3</name>
<feature type="chain" id="PRO_1000017232" description="5-methyltetrahydropteroyltriglutamate--homocysteine methyltransferase">
    <location>
        <begin position="1"/>
        <end position="764"/>
    </location>
</feature>
<feature type="active site" description="Proton donor" evidence="1">
    <location>
        <position position="703"/>
    </location>
</feature>
<feature type="binding site" evidence="1">
    <location>
        <begin position="16"/>
        <end position="19"/>
    </location>
    <ligand>
        <name>5-methyltetrahydropteroyltri-L-glutamate</name>
        <dbReference type="ChEBI" id="CHEBI:58207"/>
    </ligand>
</feature>
<feature type="binding site" evidence="1">
    <location>
        <position position="121"/>
    </location>
    <ligand>
        <name>5-methyltetrahydropteroyltri-L-glutamate</name>
        <dbReference type="ChEBI" id="CHEBI:58207"/>
    </ligand>
</feature>
<feature type="binding site" evidence="1">
    <location>
        <begin position="440"/>
        <end position="442"/>
    </location>
    <ligand>
        <name>L-homocysteine</name>
        <dbReference type="ChEBI" id="CHEBI:58199"/>
    </ligand>
</feature>
<feature type="binding site" evidence="1">
    <location>
        <begin position="440"/>
        <end position="442"/>
    </location>
    <ligand>
        <name>L-methionine</name>
        <dbReference type="ChEBI" id="CHEBI:57844"/>
    </ligand>
</feature>
<feature type="binding site" evidence="1">
    <location>
        <position position="493"/>
    </location>
    <ligand>
        <name>L-homocysteine</name>
        <dbReference type="ChEBI" id="CHEBI:58199"/>
    </ligand>
</feature>
<feature type="binding site" evidence="1">
    <location>
        <position position="493"/>
    </location>
    <ligand>
        <name>L-methionine</name>
        <dbReference type="ChEBI" id="CHEBI:57844"/>
    </ligand>
</feature>
<feature type="binding site" evidence="1">
    <location>
        <begin position="524"/>
        <end position="525"/>
    </location>
    <ligand>
        <name>5-methyltetrahydropteroyltri-L-glutamate</name>
        <dbReference type="ChEBI" id="CHEBI:58207"/>
    </ligand>
</feature>
<feature type="binding site" evidence="1">
    <location>
        <position position="570"/>
    </location>
    <ligand>
        <name>5-methyltetrahydropteroyltri-L-glutamate</name>
        <dbReference type="ChEBI" id="CHEBI:58207"/>
    </ligand>
</feature>
<feature type="binding site" evidence="1">
    <location>
        <position position="608"/>
    </location>
    <ligand>
        <name>L-homocysteine</name>
        <dbReference type="ChEBI" id="CHEBI:58199"/>
    </ligand>
</feature>
<feature type="binding site" evidence="1">
    <location>
        <position position="608"/>
    </location>
    <ligand>
        <name>L-methionine</name>
        <dbReference type="ChEBI" id="CHEBI:57844"/>
    </ligand>
</feature>
<feature type="binding site" evidence="1">
    <location>
        <position position="614"/>
    </location>
    <ligand>
        <name>5-methyltetrahydropteroyltri-L-glutamate</name>
        <dbReference type="ChEBI" id="CHEBI:58207"/>
    </ligand>
</feature>
<feature type="binding site" evidence="1">
    <location>
        <position position="650"/>
    </location>
    <ligand>
        <name>Zn(2+)</name>
        <dbReference type="ChEBI" id="CHEBI:29105"/>
        <note>catalytic</note>
    </ligand>
</feature>
<feature type="binding site" evidence="1">
    <location>
        <position position="652"/>
    </location>
    <ligand>
        <name>Zn(2+)</name>
        <dbReference type="ChEBI" id="CHEBI:29105"/>
        <note>catalytic</note>
    </ligand>
</feature>
<feature type="binding site" evidence="1">
    <location>
        <position position="674"/>
    </location>
    <ligand>
        <name>Zn(2+)</name>
        <dbReference type="ChEBI" id="CHEBI:29105"/>
        <note>catalytic</note>
    </ligand>
</feature>
<feature type="binding site" evidence="1">
    <location>
        <position position="735"/>
    </location>
    <ligand>
        <name>Zn(2+)</name>
        <dbReference type="ChEBI" id="CHEBI:29105"/>
        <note>catalytic</note>
    </ligand>
</feature>
<sequence>MVTTHNLGFPRIGAKRELKFGLERYWKGESSRGALKALGAELRQRHWNDQRDLDLAPVGDFAFYDQVLDMSFTLGNLPKRVQGFHGDALDNYFRVARGRSAQSAEEHAACCGGVSAGEMTKWFDTNYHYIVPEFHADTNFSLDPSRLLQQLAEAQAQGVAAKPVIVGPVTYLWLGKAKDDSDRLALLPKLLPVYGALLDTLTAQGVEWVQIDEPILVTELDAAWQQAFRTAYAALETRRIKVLLATYFGQLQGNLALATSLPVDGLHVDAINARDEVDALARELPAERVLSVGAINGRNIWKTDLNATLDWLEPLAKRLGDRLWLAPSCSLLHVPVDLASEEKLDAEIRSWLAFALQKLDELKVLATALNEGRDKVADALAANAAAIHSRRHSPRVNNPAVKAAIARIDAQLGNRVSPYTQRAPKQSARLNLPAFPTTTIGSFPQTGEIRQARSQFKAGTLDEAGYRKAMQAEIERSVREQESLELDVLVHGEAERNDMVEYFGEQLDGYAFSQFGWVQSYGSRCVKPPILFGDISRPKAMTVEWITYAQSLTNKPMKGMLTGPVTILNWSFVRDDQPRSVSCYQLALAIREEVLDLEKAGVRVIQIDEAALREGLPLRRAQWGEYLKWAVESFRITANGVQDDTQIHTHMCYSEFNDIIASIADMDADVITIETSRSDMELLDAFDNFKYPNEIGPGVYDIHSPNIPTQEHIVGLMKKAAERIPAERLWVNPDCGLKTRQWAEVIPALTNMVAAAKTLRNQVQ</sequence>
<organism>
    <name type="scientific">Burkholderia lata (strain ATCC 17760 / DSM 23089 / LMG 22485 / NCIMB 9086 / R18194 / 383)</name>
    <dbReference type="NCBI Taxonomy" id="482957"/>
    <lineage>
        <taxon>Bacteria</taxon>
        <taxon>Pseudomonadati</taxon>
        <taxon>Pseudomonadota</taxon>
        <taxon>Betaproteobacteria</taxon>
        <taxon>Burkholderiales</taxon>
        <taxon>Burkholderiaceae</taxon>
        <taxon>Burkholderia</taxon>
        <taxon>Burkholderia cepacia complex</taxon>
    </lineage>
</organism>
<accession>Q39AN3</accession>
<proteinExistence type="inferred from homology"/>
<reference key="1">
    <citation type="submission" date="2005-10" db="EMBL/GenBank/DDBJ databases">
        <title>Complete sequence of chromosome 2 of Burkholderia sp. 383.</title>
        <authorList>
            <consortium name="US DOE Joint Genome Institute"/>
            <person name="Copeland A."/>
            <person name="Lucas S."/>
            <person name="Lapidus A."/>
            <person name="Barry K."/>
            <person name="Detter J.C."/>
            <person name="Glavina T."/>
            <person name="Hammon N."/>
            <person name="Israni S."/>
            <person name="Pitluck S."/>
            <person name="Chain P."/>
            <person name="Malfatti S."/>
            <person name="Shin M."/>
            <person name="Vergez L."/>
            <person name="Schmutz J."/>
            <person name="Larimer F."/>
            <person name="Land M."/>
            <person name="Kyrpides N."/>
            <person name="Lykidis A."/>
            <person name="Richardson P."/>
        </authorList>
    </citation>
    <scope>NUCLEOTIDE SEQUENCE [LARGE SCALE GENOMIC DNA]</scope>
    <source>
        <strain>ATCC 17760 / DSM 23089 / LMG 22485 / NCIMB 9086 / R18194 / 383</strain>
    </source>
</reference>
<keyword id="KW-0028">Amino-acid biosynthesis</keyword>
<keyword id="KW-0479">Metal-binding</keyword>
<keyword id="KW-0486">Methionine biosynthesis</keyword>
<keyword id="KW-0489">Methyltransferase</keyword>
<keyword id="KW-0677">Repeat</keyword>
<keyword id="KW-0808">Transferase</keyword>
<keyword id="KW-0862">Zinc</keyword>
<protein>
    <recommendedName>
        <fullName evidence="1">5-methyltetrahydropteroyltriglutamate--homocysteine methyltransferase</fullName>
        <ecNumber evidence="1">2.1.1.14</ecNumber>
    </recommendedName>
    <alternativeName>
        <fullName evidence="1">Cobalamin-independent methionine synthase</fullName>
    </alternativeName>
    <alternativeName>
        <fullName evidence="1">Methionine synthase, vitamin-B12 independent isozyme</fullName>
    </alternativeName>
</protein>
<gene>
    <name evidence="1" type="primary">metE</name>
    <name type="ordered locus">Bcep18194_B0362</name>
</gene>
<comment type="function">
    <text evidence="1">Catalyzes the transfer of a methyl group from 5-methyltetrahydrofolate to homocysteine resulting in methionine formation.</text>
</comment>
<comment type="catalytic activity">
    <reaction evidence="1">
        <text>5-methyltetrahydropteroyltri-L-glutamate + L-homocysteine = tetrahydropteroyltri-L-glutamate + L-methionine</text>
        <dbReference type="Rhea" id="RHEA:21196"/>
        <dbReference type="ChEBI" id="CHEBI:57844"/>
        <dbReference type="ChEBI" id="CHEBI:58140"/>
        <dbReference type="ChEBI" id="CHEBI:58199"/>
        <dbReference type="ChEBI" id="CHEBI:58207"/>
        <dbReference type="EC" id="2.1.1.14"/>
    </reaction>
</comment>
<comment type="cofactor">
    <cofactor evidence="1">
        <name>Zn(2+)</name>
        <dbReference type="ChEBI" id="CHEBI:29105"/>
    </cofactor>
    <text evidence="1">Binds 1 zinc ion per subunit.</text>
</comment>
<comment type="pathway">
    <text evidence="1">Amino-acid biosynthesis; L-methionine biosynthesis via de novo pathway; L-methionine from L-homocysteine (MetE route): step 1/1.</text>
</comment>
<comment type="similarity">
    <text evidence="1">Belongs to the vitamin-B12 independent methionine synthase family.</text>
</comment>
<dbReference type="EC" id="2.1.1.14" evidence="1"/>
<dbReference type="EMBL" id="CP000152">
    <property type="protein sequence ID" value="ABB10478.1"/>
    <property type="molecule type" value="Genomic_DNA"/>
</dbReference>
<dbReference type="RefSeq" id="WP_011353976.1">
    <property type="nucleotide sequence ID" value="NC_007511.1"/>
</dbReference>
<dbReference type="SMR" id="Q39AN3"/>
<dbReference type="GeneID" id="45096751"/>
<dbReference type="KEGG" id="bur:Bcep18194_B0362"/>
<dbReference type="PATRIC" id="fig|482957.22.peg.3947"/>
<dbReference type="HOGENOM" id="CLU_013175_0_0_4"/>
<dbReference type="UniPathway" id="UPA00051">
    <property type="reaction ID" value="UER00082"/>
</dbReference>
<dbReference type="Proteomes" id="UP000002705">
    <property type="component" value="Chromosome 2"/>
</dbReference>
<dbReference type="GO" id="GO:0003871">
    <property type="term" value="F:5-methyltetrahydropteroyltriglutamate-homocysteine S-methyltransferase activity"/>
    <property type="evidence" value="ECO:0007669"/>
    <property type="project" value="UniProtKB-UniRule"/>
</dbReference>
<dbReference type="GO" id="GO:0008270">
    <property type="term" value="F:zinc ion binding"/>
    <property type="evidence" value="ECO:0007669"/>
    <property type="project" value="InterPro"/>
</dbReference>
<dbReference type="GO" id="GO:0009086">
    <property type="term" value="P:methionine biosynthetic process"/>
    <property type="evidence" value="ECO:0007669"/>
    <property type="project" value="UniProtKB-UniRule"/>
</dbReference>
<dbReference type="GO" id="GO:0032259">
    <property type="term" value="P:methylation"/>
    <property type="evidence" value="ECO:0007669"/>
    <property type="project" value="UniProtKB-KW"/>
</dbReference>
<dbReference type="CDD" id="cd03311">
    <property type="entry name" value="CIMS_C_terminal_like"/>
    <property type="match status" value="1"/>
</dbReference>
<dbReference type="CDD" id="cd03312">
    <property type="entry name" value="CIMS_N_terminal_like"/>
    <property type="match status" value="1"/>
</dbReference>
<dbReference type="FunFam" id="3.20.20.210:FF:000002">
    <property type="entry name" value="5-methyltetrahydropteroyltriglutamate--homocysteine methyltransferase"/>
    <property type="match status" value="1"/>
</dbReference>
<dbReference type="FunFam" id="3.20.20.210:FF:000003">
    <property type="entry name" value="5-methyltetrahydropteroyltriglutamate--homocysteine methyltransferase"/>
    <property type="match status" value="1"/>
</dbReference>
<dbReference type="Gene3D" id="3.20.20.210">
    <property type="match status" value="2"/>
</dbReference>
<dbReference type="HAMAP" id="MF_00172">
    <property type="entry name" value="Meth_synth"/>
    <property type="match status" value="1"/>
</dbReference>
<dbReference type="InterPro" id="IPR013215">
    <property type="entry name" value="Cbl-indep_Met_Synth_N"/>
</dbReference>
<dbReference type="InterPro" id="IPR006276">
    <property type="entry name" value="Cobalamin-indep_Met_synthase"/>
</dbReference>
<dbReference type="InterPro" id="IPR002629">
    <property type="entry name" value="Met_Synth_C/arc"/>
</dbReference>
<dbReference type="InterPro" id="IPR038071">
    <property type="entry name" value="UROD/MetE-like_sf"/>
</dbReference>
<dbReference type="NCBIfam" id="TIGR01371">
    <property type="entry name" value="met_syn_B12ind"/>
    <property type="match status" value="1"/>
</dbReference>
<dbReference type="NCBIfam" id="NF003556">
    <property type="entry name" value="PRK05222.1"/>
    <property type="match status" value="1"/>
</dbReference>
<dbReference type="PANTHER" id="PTHR30519">
    <property type="entry name" value="5-METHYLTETRAHYDROPTEROYLTRIGLUTAMATE--HOMOCYSTEINE METHYLTRANSFERASE"/>
    <property type="match status" value="1"/>
</dbReference>
<dbReference type="Pfam" id="PF08267">
    <property type="entry name" value="Meth_synt_1"/>
    <property type="match status" value="1"/>
</dbReference>
<dbReference type="Pfam" id="PF01717">
    <property type="entry name" value="Meth_synt_2"/>
    <property type="match status" value="1"/>
</dbReference>
<dbReference type="PIRSF" id="PIRSF000382">
    <property type="entry name" value="MeTrfase_B12_ind"/>
    <property type="match status" value="1"/>
</dbReference>
<dbReference type="SUPFAM" id="SSF51726">
    <property type="entry name" value="UROD/MetE-like"/>
    <property type="match status" value="2"/>
</dbReference>